<comment type="function">
    <text evidence="1">Catalyzes the folate-dependent formation of 5-methyl-uridine at position 54 (M-5-U54) in all tRNAs.</text>
</comment>
<comment type="catalytic activity">
    <reaction evidence="1">
        <text>uridine(54) in tRNA + (6R)-5,10-methylene-5,6,7,8-tetrahydrofolate + NADH + H(+) = 5-methyluridine(54) in tRNA + (6S)-5,6,7,8-tetrahydrofolate + NAD(+)</text>
        <dbReference type="Rhea" id="RHEA:16873"/>
        <dbReference type="Rhea" id="RHEA-COMP:10167"/>
        <dbReference type="Rhea" id="RHEA-COMP:10193"/>
        <dbReference type="ChEBI" id="CHEBI:15378"/>
        <dbReference type="ChEBI" id="CHEBI:15636"/>
        <dbReference type="ChEBI" id="CHEBI:57453"/>
        <dbReference type="ChEBI" id="CHEBI:57540"/>
        <dbReference type="ChEBI" id="CHEBI:57945"/>
        <dbReference type="ChEBI" id="CHEBI:65315"/>
        <dbReference type="ChEBI" id="CHEBI:74447"/>
        <dbReference type="EC" id="2.1.1.74"/>
    </reaction>
</comment>
<comment type="catalytic activity">
    <reaction evidence="1">
        <text>uridine(54) in tRNA + (6R)-5,10-methylene-5,6,7,8-tetrahydrofolate + NADPH + H(+) = 5-methyluridine(54) in tRNA + (6S)-5,6,7,8-tetrahydrofolate + NADP(+)</text>
        <dbReference type="Rhea" id="RHEA:62372"/>
        <dbReference type="Rhea" id="RHEA-COMP:10167"/>
        <dbReference type="Rhea" id="RHEA-COMP:10193"/>
        <dbReference type="ChEBI" id="CHEBI:15378"/>
        <dbReference type="ChEBI" id="CHEBI:15636"/>
        <dbReference type="ChEBI" id="CHEBI:57453"/>
        <dbReference type="ChEBI" id="CHEBI:57783"/>
        <dbReference type="ChEBI" id="CHEBI:58349"/>
        <dbReference type="ChEBI" id="CHEBI:65315"/>
        <dbReference type="ChEBI" id="CHEBI:74447"/>
        <dbReference type="EC" id="2.1.1.74"/>
    </reaction>
</comment>
<comment type="cofactor">
    <cofactor evidence="1">
        <name>FAD</name>
        <dbReference type="ChEBI" id="CHEBI:57692"/>
    </cofactor>
</comment>
<comment type="subcellular location">
    <subcellularLocation>
        <location evidence="1">Cytoplasm</location>
    </subcellularLocation>
</comment>
<comment type="similarity">
    <text evidence="1">Belongs to the MnmG family. TrmFO subfamily.</text>
</comment>
<sequence>MTNPIHIVGGGLAGSEAAWQIAQGGRRAVLHEMRPRRGTEAHQGEGLAELVCSNSFRSDDANGNAVGLLHQEMRSLNSLIMRAADANQVPAGGALAVDREGFSQAVTAALEEHPNVTILREEVAGLPPETWGSTILATGPLTSPALAEAVGALTGRDALAFFDAIAPIVHRDSIDMGKAWFQSRYDKAGPGGTGADYLNCPMDREQYEAFVAALIAGEKTTFKEWEATTPYFDGCLPIEVMAERGPETLRHGPMKPVGLTNPHNPTVKAYAIVQLRQDNALGTLFNMVGFQTKLRHAEQVRIFRTIPGLENAEFARLGGLHRNTYLDSPRLLDATLRLRARPQLRFAGQITGCEGYVESAAVGLMAGRYALAEAEGTTLAPLPPTTALGALIGHITGGHLEASEDAGANAPRSFQPMNVNFGLFPPLERMPRNETGKRLRGPEKAALKKRALTDRAREDLAAWIGGEDLPHAAE</sequence>
<keyword id="KW-0963">Cytoplasm</keyword>
<keyword id="KW-0274">FAD</keyword>
<keyword id="KW-0285">Flavoprotein</keyword>
<keyword id="KW-0489">Methyltransferase</keyword>
<keyword id="KW-0520">NAD</keyword>
<keyword id="KW-0521">NADP</keyword>
<keyword id="KW-0808">Transferase</keyword>
<keyword id="KW-0819">tRNA processing</keyword>
<gene>
    <name evidence="1" type="primary">trmFO</name>
    <name type="ordered locus">Mpop_4355</name>
</gene>
<accession>B1ZES7</accession>
<feature type="chain" id="PRO_0000346358" description="Methylenetetrahydrofolate--tRNA-(uracil-5-)-methyltransferase TrmFO">
    <location>
        <begin position="1"/>
        <end position="474"/>
    </location>
</feature>
<feature type="region of interest" description="Disordered" evidence="2">
    <location>
        <begin position="425"/>
        <end position="451"/>
    </location>
</feature>
<feature type="compositionally biased region" description="Basic and acidic residues" evidence="2">
    <location>
        <begin position="429"/>
        <end position="451"/>
    </location>
</feature>
<feature type="binding site" evidence="1">
    <location>
        <begin position="9"/>
        <end position="14"/>
    </location>
    <ligand>
        <name>FAD</name>
        <dbReference type="ChEBI" id="CHEBI:57692"/>
    </ligand>
</feature>
<protein>
    <recommendedName>
        <fullName evidence="1">Methylenetetrahydrofolate--tRNA-(uracil-5-)-methyltransferase TrmFO</fullName>
        <ecNumber evidence="1">2.1.1.74</ecNumber>
    </recommendedName>
    <alternativeName>
        <fullName evidence="1">Folate-dependent tRNA (uracil-5-)-methyltransferase</fullName>
    </alternativeName>
    <alternativeName>
        <fullName evidence="1">Folate-dependent tRNA(M-5-U54)-methyltransferase</fullName>
    </alternativeName>
</protein>
<dbReference type="EC" id="2.1.1.74" evidence="1"/>
<dbReference type="EMBL" id="CP001029">
    <property type="protein sequence ID" value="ACB82456.1"/>
    <property type="molecule type" value="Genomic_DNA"/>
</dbReference>
<dbReference type="RefSeq" id="WP_012456063.1">
    <property type="nucleotide sequence ID" value="NC_010725.1"/>
</dbReference>
<dbReference type="SMR" id="B1ZES7"/>
<dbReference type="STRING" id="441620.Mpop_4355"/>
<dbReference type="KEGG" id="mpo:Mpop_4355"/>
<dbReference type="eggNOG" id="COG1206">
    <property type="taxonomic scope" value="Bacteria"/>
</dbReference>
<dbReference type="HOGENOM" id="CLU_033057_1_0_5"/>
<dbReference type="OrthoDB" id="9803114at2"/>
<dbReference type="Proteomes" id="UP000007136">
    <property type="component" value="Chromosome"/>
</dbReference>
<dbReference type="GO" id="GO:0005829">
    <property type="term" value="C:cytosol"/>
    <property type="evidence" value="ECO:0007669"/>
    <property type="project" value="TreeGrafter"/>
</dbReference>
<dbReference type="GO" id="GO:0050660">
    <property type="term" value="F:flavin adenine dinucleotide binding"/>
    <property type="evidence" value="ECO:0007669"/>
    <property type="project" value="UniProtKB-UniRule"/>
</dbReference>
<dbReference type="GO" id="GO:0047151">
    <property type="term" value="F:tRNA (uracil(54)-C5)-methyltransferase activity, 5,10-methylenetetrahydrofolate-dependent"/>
    <property type="evidence" value="ECO:0007669"/>
    <property type="project" value="UniProtKB-UniRule"/>
</dbReference>
<dbReference type="GO" id="GO:0030488">
    <property type="term" value="P:tRNA methylation"/>
    <property type="evidence" value="ECO:0007669"/>
    <property type="project" value="TreeGrafter"/>
</dbReference>
<dbReference type="GO" id="GO:0002098">
    <property type="term" value="P:tRNA wobble uridine modification"/>
    <property type="evidence" value="ECO:0007669"/>
    <property type="project" value="TreeGrafter"/>
</dbReference>
<dbReference type="Gene3D" id="3.50.50.60">
    <property type="entry name" value="FAD/NAD(P)-binding domain"/>
    <property type="match status" value="2"/>
</dbReference>
<dbReference type="HAMAP" id="MF_01037">
    <property type="entry name" value="TrmFO"/>
    <property type="match status" value="1"/>
</dbReference>
<dbReference type="InterPro" id="IPR036188">
    <property type="entry name" value="FAD/NAD-bd_sf"/>
</dbReference>
<dbReference type="InterPro" id="IPR002218">
    <property type="entry name" value="MnmG-rel"/>
</dbReference>
<dbReference type="InterPro" id="IPR020595">
    <property type="entry name" value="MnmG-rel_CS"/>
</dbReference>
<dbReference type="InterPro" id="IPR040131">
    <property type="entry name" value="MnmG_N"/>
</dbReference>
<dbReference type="InterPro" id="IPR004417">
    <property type="entry name" value="TrmFO"/>
</dbReference>
<dbReference type="NCBIfam" id="TIGR00137">
    <property type="entry name" value="gid_trmFO"/>
    <property type="match status" value="1"/>
</dbReference>
<dbReference type="NCBIfam" id="NF003739">
    <property type="entry name" value="PRK05335.1"/>
    <property type="match status" value="1"/>
</dbReference>
<dbReference type="PANTHER" id="PTHR11806">
    <property type="entry name" value="GLUCOSE INHIBITED DIVISION PROTEIN A"/>
    <property type="match status" value="1"/>
</dbReference>
<dbReference type="PANTHER" id="PTHR11806:SF2">
    <property type="entry name" value="METHYLENETETRAHYDROFOLATE--TRNA-(URACIL-5-)-METHYLTRANSFERASE TRMFO"/>
    <property type="match status" value="1"/>
</dbReference>
<dbReference type="Pfam" id="PF01134">
    <property type="entry name" value="GIDA"/>
    <property type="match status" value="1"/>
</dbReference>
<dbReference type="SUPFAM" id="SSF51905">
    <property type="entry name" value="FAD/NAD(P)-binding domain"/>
    <property type="match status" value="1"/>
</dbReference>
<dbReference type="PROSITE" id="PS01281">
    <property type="entry name" value="GIDA_2"/>
    <property type="match status" value="1"/>
</dbReference>
<reference key="1">
    <citation type="submission" date="2008-04" db="EMBL/GenBank/DDBJ databases">
        <title>Complete sequence of chromosome of Methylobacterium populi BJ001.</title>
        <authorList>
            <consortium name="US DOE Joint Genome Institute"/>
            <person name="Copeland A."/>
            <person name="Lucas S."/>
            <person name="Lapidus A."/>
            <person name="Glavina del Rio T."/>
            <person name="Dalin E."/>
            <person name="Tice H."/>
            <person name="Bruce D."/>
            <person name="Goodwin L."/>
            <person name="Pitluck S."/>
            <person name="Chertkov O."/>
            <person name="Brettin T."/>
            <person name="Detter J.C."/>
            <person name="Han C."/>
            <person name="Kuske C.R."/>
            <person name="Schmutz J."/>
            <person name="Larimer F."/>
            <person name="Land M."/>
            <person name="Hauser L."/>
            <person name="Kyrpides N."/>
            <person name="Mikhailova N."/>
            <person name="Marx C."/>
            <person name="Richardson P."/>
        </authorList>
    </citation>
    <scope>NUCLEOTIDE SEQUENCE [LARGE SCALE GENOMIC DNA]</scope>
    <source>
        <strain>ATCC BAA-705 / NCIMB 13946 / BJ001</strain>
    </source>
</reference>
<organism>
    <name type="scientific">Methylorubrum populi (strain ATCC BAA-705 / NCIMB 13946 / BJ001)</name>
    <name type="common">Methylobacterium populi</name>
    <dbReference type="NCBI Taxonomy" id="441620"/>
    <lineage>
        <taxon>Bacteria</taxon>
        <taxon>Pseudomonadati</taxon>
        <taxon>Pseudomonadota</taxon>
        <taxon>Alphaproteobacteria</taxon>
        <taxon>Hyphomicrobiales</taxon>
        <taxon>Methylobacteriaceae</taxon>
        <taxon>Methylorubrum</taxon>
    </lineage>
</organism>
<name>TRMFO_METPB</name>
<proteinExistence type="inferred from homology"/>
<evidence type="ECO:0000255" key="1">
    <source>
        <dbReference type="HAMAP-Rule" id="MF_01037"/>
    </source>
</evidence>
<evidence type="ECO:0000256" key="2">
    <source>
        <dbReference type="SAM" id="MobiDB-lite"/>
    </source>
</evidence>